<name>PYRH_HELAH</name>
<comment type="function">
    <text evidence="1">Catalyzes the reversible phosphorylation of UMP to UDP.</text>
</comment>
<comment type="catalytic activity">
    <reaction evidence="1">
        <text>UMP + ATP = UDP + ADP</text>
        <dbReference type="Rhea" id="RHEA:24400"/>
        <dbReference type="ChEBI" id="CHEBI:30616"/>
        <dbReference type="ChEBI" id="CHEBI:57865"/>
        <dbReference type="ChEBI" id="CHEBI:58223"/>
        <dbReference type="ChEBI" id="CHEBI:456216"/>
        <dbReference type="EC" id="2.7.4.22"/>
    </reaction>
</comment>
<comment type="activity regulation">
    <text evidence="1">Inhibited by UTP.</text>
</comment>
<comment type="pathway">
    <text evidence="1">Pyrimidine metabolism; CTP biosynthesis via de novo pathway; UDP from UMP (UMPK route): step 1/1.</text>
</comment>
<comment type="subunit">
    <text evidence="1">Homohexamer.</text>
</comment>
<comment type="subcellular location">
    <subcellularLocation>
        <location evidence="1">Cytoplasm</location>
    </subcellularLocation>
</comment>
<comment type="similarity">
    <text evidence="1">Belongs to the UMP kinase family.</text>
</comment>
<feature type="chain" id="PRO_1000053934" description="Uridylate kinase">
    <location>
        <begin position="1"/>
        <end position="240"/>
    </location>
</feature>
<feature type="binding site" evidence="1">
    <location>
        <begin position="13"/>
        <end position="16"/>
    </location>
    <ligand>
        <name>ATP</name>
        <dbReference type="ChEBI" id="CHEBI:30616"/>
    </ligand>
</feature>
<feature type="binding site" evidence="1">
    <location>
        <position position="55"/>
    </location>
    <ligand>
        <name>UMP</name>
        <dbReference type="ChEBI" id="CHEBI:57865"/>
    </ligand>
</feature>
<feature type="binding site" evidence="1">
    <location>
        <position position="56"/>
    </location>
    <ligand>
        <name>ATP</name>
        <dbReference type="ChEBI" id="CHEBI:30616"/>
    </ligand>
</feature>
<feature type="binding site" evidence="1">
    <location>
        <position position="60"/>
    </location>
    <ligand>
        <name>ATP</name>
        <dbReference type="ChEBI" id="CHEBI:30616"/>
    </ligand>
</feature>
<feature type="binding site" evidence="1">
    <location>
        <position position="76"/>
    </location>
    <ligand>
        <name>UMP</name>
        <dbReference type="ChEBI" id="CHEBI:57865"/>
    </ligand>
</feature>
<feature type="binding site" evidence="1">
    <location>
        <begin position="137"/>
        <end position="144"/>
    </location>
    <ligand>
        <name>UMP</name>
        <dbReference type="ChEBI" id="CHEBI:57865"/>
    </ligand>
</feature>
<feature type="binding site" evidence="1">
    <location>
        <position position="164"/>
    </location>
    <ligand>
        <name>ATP</name>
        <dbReference type="ChEBI" id="CHEBI:30616"/>
    </ligand>
</feature>
<feature type="binding site" evidence="1">
    <location>
        <position position="170"/>
    </location>
    <ligand>
        <name>ATP</name>
        <dbReference type="ChEBI" id="CHEBI:30616"/>
    </ligand>
</feature>
<feature type="binding site" evidence="1">
    <location>
        <position position="173"/>
    </location>
    <ligand>
        <name>ATP</name>
        <dbReference type="ChEBI" id="CHEBI:30616"/>
    </ligand>
</feature>
<gene>
    <name evidence="1" type="primary">pyrH</name>
    <name type="ordered locus">Hac_0636</name>
</gene>
<evidence type="ECO:0000255" key="1">
    <source>
        <dbReference type="HAMAP-Rule" id="MF_01220"/>
    </source>
</evidence>
<organism>
    <name type="scientific">Helicobacter acinonychis (strain Sheeba)</name>
    <dbReference type="NCBI Taxonomy" id="382638"/>
    <lineage>
        <taxon>Bacteria</taxon>
        <taxon>Pseudomonadati</taxon>
        <taxon>Campylobacterota</taxon>
        <taxon>Epsilonproteobacteria</taxon>
        <taxon>Campylobacterales</taxon>
        <taxon>Helicobacteraceae</taxon>
        <taxon>Helicobacter</taxon>
    </lineage>
</organism>
<protein>
    <recommendedName>
        <fullName evidence="1">Uridylate kinase</fullName>
        <shortName evidence="1">UK</shortName>
        <ecNumber evidence="1">2.7.4.22</ecNumber>
    </recommendedName>
    <alternativeName>
        <fullName evidence="1">Uridine monophosphate kinase</fullName>
        <shortName evidence="1">UMP kinase</shortName>
        <shortName evidence="1">UMPK</shortName>
    </alternativeName>
</protein>
<sequence length="240" mass="26230">MQTKIKNKRVLVKFSGEALAGDNQFGIDIHVLDHIAKEIRSLVENDIEVGIVIGGGNIIRGVSAAQGGIIRRTSGDYMGMLATVINAVAMQEALEHIGLDTRVQSAIEIKEICESYIYRKAIRHLEKGRVVIFGAGTGNPFFTTDTAATLRAIEIGSDLIIKATKVDGIYDKDPNKFKDAKKLDTLSYNDALIGDIEVMDDTAISLAKDNKLPIVVCNMFKKGNLLQVIKHQQGVFSMVK</sequence>
<keyword id="KW-0067">ATP-binding</keyword>
<keyword id="KW-0963">Cytoplasm</keyword>
<keyword id="KW-0418">Kinase</keyword>
<keyword id="KW-0547">Nucleotide-binding</keyword>
<keyword id="KW-0665">Pyrimidine biosynthesis</keyword>
<keyword id="KW-0808">Transferase</keyword>
<accession>Q17Y33</accession>
<dbReference type="EC" id="2.7.4.22" evidence="1"/>
<dbReference type="EMBL" id="AM260522">
    <property type="protein sequence ID" value="CAJ99443.1"/>
    <property type="molecule type" value="Genomic_DNA"/>
</dbReference>
<dbReference type="RefSeq" id="WP_011577557.1">
    <property type="nucleotide sequence ID" value="NC_008229.1"/>
</dbReference>
<dbReference type="SMR" id="Q17Y33"/>
<dbReference type="STRING" id="382638.Hac_0636"/>
<dbReference type="GeneID" id="31758096"/>
<dbReference type="KEGG" id="hac:Hac_0636"/>
<dbReference type="eggNOG" id="COG0528">
    <property type="taxonomic scope" value="Bacteria"/>
</dbReference>
<dbReference type="HOGENOM" id="CLU_033861_0_0_7"/>
<dbReference type="OrthoDB" id="9807458at2"/>
<dbReference type="BioCyc" id="HACI382638:HAC_RS02780-MONOMER"/>
<dbReference type="UniPathway" id="UPA00159">
    <property type="reaction ID" value="UER00275"/>
</dbReference>
<dbReference type="Proteomes" id="UP000000775">
    <property type="component" value="Chromosome"/>
</dbReference>
<dbReference type="GO" id="GO:0005829">
    <property type="term" value="C:cytosol"/>
    <property type="evidence" value="ECO:0007669"/>
    <property type="project" value="TreeGrafter"/>
</dbReference>
<dbReference type="GO" id="GO:0005524">
    <property type="term" value="F:ATP binding"/>
    <property type="evidence" value="ECO:0007669"/>
    <property type="project" value="UniProtKB-KW"/>
</dbReference>
<dbReference type="GO" id="GO:0033862">
    <property type="term" value="F:UMP kinase activity"/>
    <property type="evidence" value="ECO:0007669"/>
    <property type="project" value="UniProtKB-EC"/>
</dbReference>
<dbReference type="GO" id="GO:0044210">
    <property type="term" value="P:'de novo' CTP biosynthetic process"/>
    <property type="evidence" value="ECO:0007669"/>
    <property type="project" value="UniProtKB-UniRule"/>
</dbReference>
<dbReference type="GO" id="GO:0006225">
    <property type="term" value="P:UDP biosynthetic process"/>
    <property type="evidence" value="ECO:0007669"/>
    <property type="project" value="TreeGrafter"/>
</dbReference>
<dbReference type="CDD" id="cd04254">
    <property type="entry name" value="AAK_UMPK-PyrH-Ec"/>
    <property type="match status" value="1"/>
</dbReference>
<dbReference type="FunFam" id="3.40.1160.10:FF:000001">
    <property type="entry name" value="Uridylate kinase"/>
    <property type="match status" value="1"/>
</dbReference>
<dbReference type="Gene3D" id="3.40.1160.10">
    <property type="entry name" value="Acetylglutamate kinase-like"/>
    <property type="match status" value="1"/>
</dbReference>
<dbReference type="HAMAP" id="MF_01220_B">
    <property type="entry name" value="PyrH_B"/>
    <property type="match status" value="1"/>
</dbReference>
<dbReference type="InterPro" id="IPR036393">
    <property type="entry name" value="AceGlu_kinase-like_sf"/>
</dbReference>
<dbReference type="InterPro" id="IPR001048">
    <property type="entry name" value="Asp/Glu/Uridylate_kinase"/>
</dbReference>
<dbReference type="InterPro" id="IPR011817">
    <property type="entry name" value="Uridylate_kinase"/>
</dbReference>
<dbReference type="InterPro" id="IPR015963">
    <property type="entry name" value="Uridylate_kinase_bac"/>
</dbReference>
<dbReference type="NCBIfam" id="TIGR02075">
    <property type="entry name" value="pyrH_bact"/>
    <property type="match status" value="1"/>
</dbReference>
<dbReference type="PANTHER" id="PTHR42833">
    <property type="entry name" value="URIDYLATE KINASE"/>
    <property type="match status" value="1"/>
</dbReference>
<dbReference type="PANTHER" id="PTHR42833:SF4">
    <property type="entry name" value="URIDYLATE KINASE PUMPKIN, CHLOROPLASTIC"/>
    <property type="match status" value="1"/>
</dbReference>
<dbReference type="Pfam" id="PF00696">
    <property type="entry name" value="AA_kinase"/>
    <property type="match status" value="1"/>
</dbReference>
<dbReference type="PIRSF" id="PIRSF005650">
    <property type="entry name" value="Uridylate_kin"/>
    <property type="match status" value="1"/>
</dbReference>
<dbReference type="SUPFAM" id="SSF53633">
    <property type="entry name" value="Carbamate kinase-like"/>
    <property type="match status" value="1"/>
</dbReference>
<proteinExistence type="inferred from homology"/>
<reference key="1">
    <citation type="journal article" date="2006" name="PLoS Genet.">
        <title>Who ate whom? Adaptive Helicobacter genomic changes that accompanied a host jump from early humans to large felines.</title>
        <authorList>
            <person name="Eppinger M."/>
            <person name="Baar C."/>
            <person name="Linz B."/>
            <person name="Raddatz G."/>
            <person name="Lanz C."/>
            <person name="Keller H."/>
            <person name="Morelli G."/>
            <person name="Gressmann H."/>
            <person name="Achtman M."/>
            <person name="Schuster S.C."/>
        </authorList>
    </citation>
    <scope>NUCLEOTIDE SEQUENCE [LARGE SCALE GENOMIC DNA]</scope>
    <source>
        <strain>Sheeba</strain>
    </source>
</reference>